<name>AOXD_RAT</name>
<accession>Q5QE79</accession>
<sequence length="1334" mass="147841">MPSSSDELIFFVNGKKVIEKNPVPEMNLLFYVRKVLHLTGTKYSCGGGGCGACTVMISRYNPESKKIYHYPATACLVPVCSLHGAAVTTVEGVGSIKRRIHPVQERLAKCHGTQCGFCSPGMVMSIYTLLRNHPEPTPDQITEALGGNLCRCTGYRPIVESGKTFSPESSVCQMKGSGKCCMDLDEGCSESTKERMCTKLYNEDEFQPLDPSQEPIFPPELIRMAEDPHKRRLTFQGERTIWIMPVTLNGLLELKASYPEAPLVMGNTAVGPGMKFNNEFHPVFISPLGLPELNLVDTANSGGVTIGARHSLAQMKDILHSLTLEQPKEKTKTHQALLKHLRTLAGPQIRNMATLGGHVVSRPDFSDLNPILAAGNATINVISKEGQRQIPLNGPFLERLPEASLKPEEVALSVFIPYSGQWQYVSGLRLAQRQENAFAIVNAGMSVEFEEGTNTIKDLQMLFGSVAPTVVSASQTCKQLIGRQWDDQMLSDACQLVLEEIRIPPDAEGGMVEYRRTLIISLLFKFYLKVRRWLSEMDPQKFPDIPEKFVSALDDLPIETPQGIQMFQCVDPNQPEQDPVGHPIMHQSGIKHATGEAKFVDDMPRINQELCLTVVTSTRAHAKITSIDVSEALAYPGVVDVITAEDVPGDNNHSGEIFYAQNEVICVGQIICTVAADTYIHAKEAAKRVKITYDDIEPAIITIEQALEHNSFLSSEKKIEQGNVDYAFKHVDHIIEGEIHVEGQEHFYMETQTILAIPQTEDKEMVLHVGTQFPTHVQEYVSAALKVPRNRIACQMKRTGGAFGGKVTKPALLGAVCAVAAHKTGRPIRFILDRSNDMLITAGRHPLLGKYKIGFMNNGKIKAADVEYYTNGGCTPDESEMVIEFIVLKSENAYHIPNFRCRGRACKTNLPSNTAFRGFGFPQATVVVEAYIAAVASKCNLLPEEIREINMYKQISKTAYKQTFNPEPLRRCWKECLQKSSFFARKQAAEEFNKNNYWKKKGLAVVPMKFSVAVPMAFYNQAAALVHIFLDGSVLLTHGGCELGQGLHTKMIQVASRELNIPKSYVHLVETSTVTVPNAVFTAGSMGADINGKAVQNACQTLLDRLQPIIKKNPKGKWEEWVKKAFEESISLSATGYFKGYQTNMDWEKEEGDPYPYYVYGAACSEVEVDCLTGAHKLLRTDIFMDAAFSINPALDIGQVEGAFIQGMGFYTIEELKYSPKGVLYSRGPDDYKIPTVTEIPEEFYVTMVRSRNPIAIYSSKGLGEAGMFLGSSVLFAIYDAVTTARKERGLSDIFPLNSPATPEVIRMACKDQFTDMIPRDDPSTFTPWSIHVS</sequence>
<gene>
    <name type="primary">Aox4</name>
    <name type="synonym">Aoh2</name>
</gene>
<feature type="chain" id="PRO_0000425251" description="Aldehyde oxidase 4">
    <location>
        <begin position="1"/>
        <end position="1334"/>
    </location>
</feature>
<feature type="domain" description="2Fe-2S ferredoxin-type" evidence="5">
    <location>
        <begin position="6"/>
        <end position="93"/>
    </location>
</feature>
<feature type="domain" description="FAD-binding PCMH-type" evidence="6">
    <location>
        <begin position="235"/>
        <end position="421"/>
    </location>
</feature>
<feature type="active site" description="Proton acceptor; for azaheterocycle hydroxylase activity" evidence="2">
    <location>
        <position position="1265"/>
    </location>
</feature>
<feature type="binding site" evidence="3">
    <location>
        <position position="45"/>
    </location>
    <ligand>
        <name>[2Fe-2S] cluster</name>
        <dbReference type="ChEBI" id="CHEBI:190135"/>
        <label>1</label>
    </ligand>
</feature>
<feature type="binding site" evidence="3">
    <location>
        <position position="50"/>
    </location>
    <ligand>
        <name>[2Fe-2S] cluster</name>
        <dbReference type="ChEBI" id="CHEBI:190135"/>
        <label>1</label>
    </ligand>
</feature>
<feature type="binding site" evidence="3">
    <location>
        <position position="53"/>
    </location>
    <ligand>
        <name>[2Fe-2S] cluster</name>
        <dbReference type="ChEBI" id="CHEBI:190135"/>
        <label>1</label>
    </ligand>
</feature>
<feature type="binding site" evidence="3">
    <location>
        <position position="75"/>
    </location>
    <ligand>
        <name>[2Fe-2S] cluster</name>
        <dbReference type="ChEBI" id="CHEBI:190135"/>
        <label>1</label>
    </ligand>
</feature>
<feature type="binding site" evidence="3">
    <location>
        <position position="114"/>
    </location>
    <ligand>
        <name>Mo-molybdopterin</name>
        <dbReference type="ChEBI" id="CHEBI:71302"/>
    </ligand>
</feature>
<feature type="binding site" evidence="3">
    <location>
        <position position="115"/>
    </location>
    <ligand>
        <name>[2Fe-2S] cluster</name>
        <dbReference type="ChEBI" id="CHEBI:190135"/>
        <label>2</label>
    </ligand>
</feature>
<feature type="binding site" evidence="3">
    <location>
        <position position="118"/>
    </location>
    <ligand>
        <name>[2Fe-2S] cluster</name>
        <dbReference type="ChEBI" id="CHEBI:190135"/>
        <label>2</label>
    </ligand>
</feature>
<feature type="binding site" evidence="3">
    <location>
        <position position="150"/>
    </location>
    <ligand>
        <name>[2Fe-2S] cluster</name>
        <dbReference type="ChEBI" id="CHEBI:190135"/>
        <label>2</label>
    </ligand>
</feature>
<feature type="binding site" evidence="3">
    <location>
        <position position="152"/>
    </location>
    <ligand>
        <name>[2Fe-2S] cluster</name>
        <dbReference type="ChEBI" id="CHEBI:190135"/>
        <label>2</label>
    </ligand>
</feature>
<feature type="binding site" evidence="3">
    <location>
        <position position="152"/>
    </location>
    <ligand>
        <name>Mo-molybdopterin</name>
        <dbReference type="ChEBI" id="CHEBI:71302"/>
    </ligand>
</feature>
<feature type="binding site" evidence="3">
    <location>
        <begin position="263"/>
        <end position="270"/>
    </location>
    <ligand>
        <name>FAD</name>
        <dbReference type="ChEBI" id="CHEBI:57692"/>
    </ligand>
</feature>
<feature type="binding site" evidence="3">
    <location>
        <position position="345"/>
    </location>
    <ligand>
        <name>FAD</name>
        <dbReference type="ChEBI" id="CHEBI:57692"/>
    </ligand>
</feature>
<feature type="binding site" evidence="1">
    <location>
        <position position="354"/>
    </location>
    <ligand>
        <name>FAD</name>
        <dbReference type="ChEBI" id="CHEBI:57692"/>
    </ligand>
</feature>
<feature type="binding site" evidence="3">
    <location>
        <position position="358"/>
    </location>
    <ligand>
        <name>FAD</name>
        <dbReference type="ChEBI" id="CHEBI:57692"/>
    </ligand>
</feature>
<feature type="binding site" evidence="3">
    <location>
        <position position="367"/>
    </location>
    <ligand>
        <name>FAD</name>
        <dbReference type="ChEBI" id="CHEBI:57692"/>
    </ligand>
</feature>
<feature type="binding site" evidence="1">
    <location>
        <position position="411"/>
    </location>
    <ligand>
        <name>FAD</name>
        <dbReference type="ChEBI" id="CHEBI:57692"/>
    </ligand>
</feature>
<feature type="binding site" evidence="3">
    <location>
        <begin position="802"/>
        <end position="803"/>
    </location>
    <ligand>
        <name>Mo-molybdopterin</name>
        <dbReference type="ChEBI" id="CHEBI:71302"/>
    </ligand>
</feature>
<feature type="binding site" evidence="1">
    <location>
        <position position="802"/>
    </location>
    <ligand>
        <name>Mo-molybdopterin</name>
        <dbReference type="ChEBI" id="CHEBI:71302"/>
    </ligand>
</feature>
<feature type="binding site" evidence="1">
    <location>
        <position position="1043"/>
    </location>
    <ligand>
        <name>Mo-molybdopterin</name>
        <dbReference type="ChEBI" id="CHEBI:71302"/>
    </ligand>
</feature>
<feature type="binding site" evidence="3">
    <location>
        <begin position="1084"/>
        <end position="1087"/>
    </location>
    <ligand>
        <name>Mo-molybdopterin</name>
        <dbReference type="ChEBI" id="CHEBI:71302"/>
    </ligand>
</feature>
<feature type="binding site" evidence="3">
    <location>
        <position position="1199"/>
    </location>
    <ligand>
        <name>Mo-molybdopterin</name>
        <dbReference type="ChEBI" id="CHEBI:71302"/>
    </ligand>
</feature>
<feature type="binding site" evidence="3">
    <location>
        <position position="1263"/>
    </location>
    <ligand>
        <name>Mo-molybdopterin</name>
        <dbReference type="ChEBI" id="CHEBI:71302"/>
    </ligand>
</feature>
<protein>
    <recommendedName>
        <fullName>Aldehyde oxidase 4</fullName>
        <ecNumber>1.2.3.1</ecNumber>
    </recommendedName>
    <alternativeName>
        <fullName>Aldehyde oxidase homolog 2</fullName>
    </alternativeName>
    <alternativeName>
        <fullName>Azaheterocycle hydroxylase 4</fullName>
        <ecNumber>1.17.3.-</ecNumber>
    </alternativeName>
    <alternativeName>
        <fullName>Retinal oxidase</fullName>
    </alternativeName>
</protein>
<organism>
    <name type="scientific">Rattus norvegicus</name>
    <name type="common">Rat</name>
    <dbReference type="NCBI Taxonomy" id="10116"/>
    <lineage>
        <taxon>Eukaryota</taxon>
        <taxon>Metazoa</taxon>
        <taxon>Chordata</taxon>
        <taxon>Craniata</taxon>
        <taxon>Vertebrata</taxon>
        <taxon>Euteleostomi</taxon>
        <taxon>Mammalia</taxon>
        <taxon>Eutheria</taxon>
        <taxon>Euarchontoglires</taxon>
        <taxon>Glires</taxon>
        <taxon>Rodentia</taxon>
        <taxon>Myomorpha</taxon>
        <taxon>Muroidea</taxon>
        <taxon>Muridae</taxon>
        <taxon>Murinae</taxon>
        <taxon>Rattus</taxon>
    </lineage>
</organism>
<keyword id="KW-0001">2Fe-2S</keyword>
<keyword id="KW-0963">Cytoplasm</keyword>
<keyword id="KW-0274">FAD</keyword>
<keyword id="KW-0285">Flavoprotein</keyword>
<keyword id="KW-0408">Iron</keyword>
<keyword id="KW-0411">Iron-sulfur</keyword>
<keyword id="KW-0479">Metal-binding</keyword>
<keyword id="KW-0500">Molybdenum</keyword>
<keyword id="KW-0560">Oxidoreductase</keyword>
<keyword id="KW-1185">Reference proteome</keyword>
<reference key="1">
    <citation type="journal article" date="2004" name="J. Biol. Chem.">
        <title>The aldehyde oxidase gene cluster in mice and rats. Aldehyde oxidase homologue 3, a novel member of the molybdo-flavoenzyme family with selective expression in the olfactory mucosa.</title>
        <authorList>
            <person name="Kurosaki M."/>
            <person name="Terao M."/>
            <person name="Barzago M.M."/>
            <person name="Bastone A."/>
            <person name="Bernardinello D."/>
            <person name="Salmona M."/>
            <person name="Garattini E."/>
        </authorList>
    </citation>
    <scope>NUCLEOTIDE SEQUENCE [MRNA]</scope>
    <source>
        <strain>CD Charles River</strain>
    </source>
</reference>
<reference key="2">
    <citation type="journal article" date="2013" name="Cell. Mol. Life Sci.">
        <title>Structure and evolution of vertebrate aldehyde oxidases: from gene duplication to gene suppression.</title>
        <authorList>
            <person name="Kurosaki M."/>
            <person name="Bolis M."/>
            <person name="Fratelli M."/>
            <person name="Barzago M.M."/>
            <person name="Pattini L."/>
            <person name="Perretta G."/>
            <person name="Terao M."/>
            <person name="Garattini E."/>
        </authorList>
    </citation>
    <scope>IDENTIFICATION OF PARALOGS</scope>
</reference>
<evidence type="ECO:0000250" key="1">
    <source>
        <dbReference type="UniProtKB" id="G3X982"/>
    </source>
</evidence>
<evidence type="ECO:0000250" key="2">
    <source>
        <dbReference type="UniProtKB" id="O54754"/>
    </source>
</evidence>
<evidence type="ECO:0000250" key="3">
    <source>
        <dbReference type="UniProtKB" id="Q06278"/>
    </source>
</evidence>
<evidence type="ECO:0000250" key="4">
    <source>
        <dbReference type="UniProtKB" id="Q3TYQ9"/>
    </source>
</evidence>
<evidence type="ECO:0000255" key="5">
    <source>
        <dbReference type="PROSITE-ProRule" id="PRU00465"/>
    </source>
</evidence>
<evidence type="ECO:0000255" key="6">
    <source>
        <dbReference type="PROSITE-ProRule" id="PRU00718"/>
    </source>
</evidence>
<evidence type="ECO:0000305" key="7"/>
<evidence type="ECO:0000305" key="8">
    <source>
    </source>
</evidence>
<proteinExistence type="evidence at transcript level"/>
<dbReference type="EC" id="1.2.3.1"/>
<dbReference type="EC" id="1.17.3.-"/>
<dbReference type="EMBL" id="AY665587">
    <property type="protein sequence ID" value="AAV68254.1"/>
    <property type="molecule type" value="mRNA"/>
</dbReference>
<dbReference type="RefSeq" id="NP_001008523.1">
    <property type="nucleotide sequence ID" value="NM_001008523.1"/>
</dbReference>
<dbReference type="SMR" id="Q5QE79"/>
<dbReference type="FunCoup" id="Q5QE79">
    <property type="interactions" value="160"/>
</dbReference>
<dbReference type="STRING" id="10116.ENSRNOP00000035377"/>
<dbReference type="GlyGen" id="Q5QE79">
    <property type="glycosylation" value="2 sites"/>
</dbReference>
<dbReference type="PhosphoSitePlus" id="Q5QE79"/>
<dbReference type="PaxDb" id="10116-ENSRNOP00000035377"/>
<dbReference type="GeneID" id="316424"/>
<dbReference type="KEGG" id="rno:316424"/>
<dbReference type="AGR" id="RGD:1311975"/>
<dbReference type="CTD" id="71872"/>
<dbReference type="RGD" id="1311975">
    <property type="gene designation" value="Aox4"/>
</dbReference>
<dbReference type="eggNOG" id="KOG0430">
    <property type="taxonomic scope" value="Eukaryota"/>
</dbReference>
<dbReference type="InParanoid" id="Q5QE79"/>
<dbReference type="BRENDA" id="1.2.3.1">
    <property type="organism ID" value="5301"/>
</dbReference>
<dbReference type="PRO" id="PR:Q5QE79"/>
<dbReference type="Proteomes" id="UP000002494">
    <property type="component" value="Unplaced"/>
</dbReference>
<dbReference type="GO" id="GO:0005829">
    <property type="term" value="C:cytosol"/>
    <property type="evidence" value="ECO:0000250"/>
    <property type="project" value="UniProtKB"/>
</dbReference>
<dbReference type="GO" id="GO:0051537">
    <property type="term" value="F:2 iron, 2 sulfur cluster binding"/>
    <property type="evidence" value="ECO:0000250"/>
    <property type="project" value="UniProtKB"/>
</dbReference>
<dbReference type="GO" id="GO:0004031">
    <property type="term" value="F:aldehyde oxidase activity"/>
    <property type="evidence" value="ECO:0000250"/>
    <property type="project" value="UniProtKB"/>
</dbReference>
<dbReference type="GO" id="GO:0071949">
    <property type="term" value="F:FAD binding"/>
    <property type="evidence" value="ECO:0007669"/>
    <property type="project" value="InterPro"/>
</dbReference>
<dbReference type="GO" id="GO:0050660">
    <property type="term" value="F:flavin adenine dinucleotide binding"/>
    <property type="evidence" value="ECO:0000250"/>
    <property type="project" value="UniProtKB"/>
</dbReference>
<dbReference type="GO" id="GO:0005506">
    <property type="term" value="F:iron ion binding"/>
    <property type="evidence" value="ECO:0000250"/>
    <property type="project" value="UniProtKB"/>
</dbReference>
<dbReference type="GO" id="GO:0043546">
    <property type="term" value="F:molybdopterin cofactor binding"/>
    <property type="evidence" value="ECO:0000250"/>
    <property type="project" value="UniProtKB"/>
</dbReference>
<dbReference type="GO" id="GO:0051287">
    <property type="term" value="F:NAD binding"/>
    <property type="evidence" value="ECO:0007669"/>
    <property type="project" value="InterPro"/>
</dbReference>
<dbReference type="GO" id="GO:0042803">
    <property type="term" value="F:protein homodimerization activity"/>
    <property type="evidence" value="ECO:0000250"/>
    <property type="project" value="UniProtKB"/>
</dbReference>
<dbReference type="GO" id="GO:0006805">
    <property type="term" value="P:xenobiotic metabolic process"/>
    <property type="evidence" value="ECO:0000250"/>
    <property type="project" value="UniProtKB"/>
</dbReference>
<dbReference type="FunFam" id="1.10.150.120:FF:000001">
    <property type="entry name" value="Aldehyde oxidase 1"/>
    <property type="match status" value="1"/>
</dbReference>
<dbReference type="FunFam" id="3.10.20.30:FF:000015">
    <property type="entry name" value="Aldehyde oxidase 1"/>
    <property type="match status" value="1"/>
</dbReference>
<dbReference type="FunFam" id="3.30.365.10:FF:000003">
    <property type="entry name" value="Aldehyde oxidase 1"/>
    <property type="match status" value="1"/>
</dbReference>
<dbReference type="FunFam" id="3.90.1170.50:FF:000001">
    <property type="entry name" value="Aldehyde oxidase 1"/>
    <property type="match status" value="1"/>
</dbReference>
<dbReference type="FunFam" id="3.30.365.10:FF:000025">
    <property type="entry name" value="Aldehyde oxidase 4"/>
    <property type="match status" value="1"/>
</dbReference>
<dbReference type="FunFam" id="3.30.365.10:FF:000001">
    <property type="entry name" value="Xanthine dehydrogenase oxidase"/>
    <property type="match status" value="1"/>
</dbReference>
<dbReference type="FunFam" id="3.30.365.10:FF:000004">
    <property type="entry name" value="Xanthine dehydrogenase oxidase"/>
    <property type="match status" value="1"/>
</dbReference>
<dbReference type="FunFam" id="3.30.390.50:FF:000001">
    <property type="entry name" value="Xanthine dehydrogenase oxidase"/>
    <property type="match status" value="1"/>
</dbReference>
<dbReference type="FunFam" id="3.30.43.10:FF:000001">
    <property type="entry name" value="Xanthine dehydrogenase/oxidase"/>
    <property type="match status" value="1"/>
</dbReference>
<dbReference type="FunFam" id="3.30.465.10:FF:000004">
    <property type="entry name" value="Xanthine dehydrogenase/oxidase"/>
    <property type="match status" value="1"/>
</dbReference>
<dbReference type="Gene3D" id="3.10.20.30">
    <property type="match status" value="1"/>
</dbReference>
<dbReference type="Gene3D" id="3.30.465.10">
    <property type="match status" value="1"/>
</dbReference>
<dbReference type="Gene3D" id="1.10.150.120">
    <property type="entry name" value="[2Fe-2S]-binding domain"/>
    <property type="match status" value="1"/>
</dbReference>
<dbReference type="Gene3D" id="3.90.1170.50">
    <property type="entry name" value="Aldehyde oxidase/xanthine dehydrogenase, a/b hammerhead"/>
    <property type="match status" value="1"/>
</dbReference>
<dbReference type="Gene3D" id="3.30.365.10">
    <property type="entry name" value="Aldehyde oxidase/xanthine dehydrogenase, molybdopterin binding domain"/>
    <property type="match status" value="5"/>
</dbReference>
<dbReference type="Gene3D" id="3.30.390.50">
    <property type="entry name" value="CO dehydrogenase flavoprotein, C-terminal domain"/>
    <property type="match status" value="1"/>
</dbReference>
<dbReference type="Gene3D" id="3.30.43.10">
    <property type="entry name" value="Uridine Diphospho-n-acetylenolpyruvylglucosamine Reductase, domain 2"/>
    <property type="match status" value="1"/>
</dbReference>
<dbReference type="InterPro" id="IPR002888">
    <property type="entry name" value="2Fe-2S-bd"/>
</dbReference>
<dbReference type="InterPro" id="IPR036884">
    <property type="entry name" value="2Fe-2S-bd_dom_sf"/>
</dbReference>
<dbReference type="InterPro" id="IPR036010">
    <property type="entry name" value="2Fe-2S_ferredoxin-like_sf"/>
</dbReference>
<dbReference type="InterPro" id="IPR001041">
    <property type="entry name" value="2Fe-2S_ferredoxin-type"/>
</dbReference>
<dbReference type="InterPro" id="IPR006058">
    <property type="entry name" value="2Fe2S_fd_BS"/>
</dbReference>
<dbReference type="InterPro" id="IPR000674">
    <property type="entry name" value="Ald_Oxase/Xan_DH_a/b"/>
</dbReference>
<dbReference type="InterPro" id="IPR036856">
    <property type="entry name" value="Ald_Oxase/Xan_DH_a/b_sf"/>
</dbReference>
<dbReference type="InterPro" id="IPR016208">
    <property type="entry name" value="Ald_Oxase/xanthine_DH-like"/>
</dbReference>
<dbReference type="InterPro" id="IPR014313">
    <property type="entry name" value="Aldehyde_oxidase"/>
</dbReference>
<dbReference type="InterPro" id="IPR008274">
    <property type="entry name" value="AldOxase/xan_DH_MoCoBD1"/>
</dbReference>
<dbReference type="InterPro" id="IPR046867">
    <property type="entry name" value="AldOxase/xan_DH_MoCoBD2"/>
</dbReference>
<dbReference type="InterPro" id="IPR037165">
    <property type="entry name" value="AldOxase/xan_DH_Mopterin-bd_sf"/>
</dbReference>
<dbReference type="InterPro" id="IPR012675">
    <property type="entry name" value="Beta-grasp_dom_sf"/>
</dbReference>
<dbReference type="InterPro" id="IPR005107">
    <property type="entry name" value="CO_DH_flav_C"/>
</dbReference>
<dbReference type="InterPro" id="IPR036683">
    <property type="entry name" value="CO_DH_flav_C_dom_sf"/>
</dbReference>
<dbReference type="InterPro" id="IPR016166">
    <property type="entry name" value="FAD-bd_PCMH"/>
</dbReference>
<dbReference type="InterPro" id="IPR036318">
    <property type="entry name" value="FAD-bd_PCMH-like_sf"/>
</dbReference>
<dbReference type="InterPro" id="IPR016167">
    <property type="entry name" value="FAD-bd_PCMH_sub1"/>
</dbReference>
<dbReference type="InterPro" id="IPR016169">
    <property type="entry name" value="FAD-bd_PCMH_sub2"/>
</dbReference>
<dbReference type="InterPro" id="IPR002346">
    <property type="entry name" value="Mopterin_DH_FAD-bd"/>
</dbReference>
<dbReference type="NCBIfam" id="TIGR02969">
    <property type="entry name" value="mam_aldehyde_ox"/>
    <property type="match status" value="1"/>
</dbReference>
<dbReference type="PANTHER" id="PTHR45444">
    <property type="entry name" value="XANTHINE DEHYDROGENASE"/>
    <property type="match status" value="1"/>
</dbReference>
<dbReference type="PANTHER" id="PTHR45444:SF3">
    <property type="entry name" value="XANTHINE DEHYDROGENASE"/>
    <property type="match status" value="1"/>
</dbReference>
<dbReference type="Pfam" id="PF01315">
    <property type="entry name" value="Ald_Xan_dh_C"/>
    <property type="match status" value="1"/>
</dbReference>
<dbReference type="Pfam" id="PF03450">
    <property type="entry name" value="CO_deh_flav_C"/>
    <property type="match status" value="1"/>
</dbReference>
<dbReference type="Pfam" id="PF00941">
    <property type="entry name" value="FAD_binding_5"/>
    <property type="match status" value="1"/>
</dbReference>
<dbReference type="Pfam" id="PF00111">
    <property type="entry name" value="Fer2"/>
    <property type="match status" value="1"/>
</dbReference>
<dbReference type="Pfam" id="PF01799">
    <property type="entry name" value="Fer2_2"/>
    <property type="match status" value="1"/>
</dbReference>
<dbReference type="Pfam" id="PF02738">
    <property type="entry name" value="MoCoBD_1"/>
    <property type="match status" value="1"/>
</dbReference>
<dbReference type="Pfam" id="PF20256">
    <property type="entry name" value="MoCoBD_2"/>
    <property type="match status" value="1"/>
</dbReference>
<dbReference type="PIRSF" id="PIRSF000127">
    <property type="entry name" value="Xanthine_DH"/>
    <property type="match status" value="1"/>
</dbReference>
<dbReference type="SMART" id="SM01008">
    <property type="entry name" value="Ald_Xan_dh_C"/>
    <property type="match status" value="1"/>
</dbReference>
<dbReference type="SMART" id="SM01092">
    <property type="entry name" value="CO_deh_flav_C"/>
    <property type="match status" value="1"/>
</dbReference>
<dbReference type="SUPFAM" id="SSF54292">
    <property type="entry name" value="2Fe-2S ferredoxin-like"/>
    <property type="match status" value="1"/>
</dbReference>
<dbReference type="SUPFAM" id="SSF55447">
    <property type="entry name" value="CO dehydrogenase flavoprotein C-terminal domain-like"/>
    <property type="match status" value="1"/>
</dbReference>
<dbReference type="SUPFAM" id="SSF47741">
    <property type="entry name" value="CO dehydrogenase ISP C-domain like"/>
    <property type="match status" value="1"/>
</dbReference>
<dbReference type="SUPFAM" id="SSF54665">
    <property type="entry name" value="CO dehydrogenase molybdoprotein N-domain-like"/>
    <property type="match status" value="1"/>
</dbReference>
<dbReference type="SUPFAM" id="SSF56176">
    <property type="entry name" value="FAD-binding/transporter-associated domain-like"/>
    <property type="match status" value="1"/>
</dbReference>
<dbReference type="SUPFAM" id="SSF56003">
    <property type="entry name" value="Molybdenum cofactor-binding domain"/>
    <property type="match status" value="1"/>
</dbReference>
<dbReference type="PROSITE" id="PS00197">
    <property type="entry name" value="2FE2S_FER_1"/>
    <property type="match status" value="1"/>
</dbReference>
<dbReference type="PROSITE" id="PS51085">
    <property type="entry name" value="2FE2S_FER_2"/>
    <property type="match status" value="1"/>
</dbReference>
<dbReference type="PROSITE" id="PS51387">
    <property type="entry name" value="FAD_PCMH"/>
    <property type="match status" value="1"/>
</dbReference>
<comment type="function">
    <text evidence="4">Aldehyde oxidase able to catalyze the oxidation of retinaldehyde into retinoate. Acts as a negative modulator of the epidermal trophism. May be able to oxidize a wide variety of aldehydes into their corresponding carboxylates and to hydroxylate azaheterocycles (By similarity).</text>
</comment>
<comment type="catalytic activity">
    <reaction evidence="4">
        <text>an aldehyde + O2 + H2O = a carboxylate + H2O2 + H(+)</text>
        <dbReference type="Rhea" id="RHEA:16829"/>
        <dbReference type="ChEBI" id="CHEBI:15377"/>
        <dbReference type="ChEBI" id="CHEBI:15378"/>
        <dbReference type="ChEBI" id="CHEBI:15379"/>
        <dbReference type="ChEBI" id="CHEBI:16240"/>
        <dbReference type="ChEBI" id="CHEBI:17478"/>
        <dbReference type="ChEBI" id="CHEBI:29067"/>
        <dbReference type="EC" id="1.2.3.1"/>
    </reaction>
</comment>
<comment type="catalytic activity">
    <reaction evidence="4">
        <text>retinal + O2 + H2O = retinoate + H2O2 + H(+)</text>
        <dbReference type="Rhea" id="RHEA:56736"/>
        <dbReference type="ChEBI" id="CHEBI:15035"/>
        <dbReference type="ChEBI" id="CHEBI:15036"/>
        <dbReference type="ChEBI" id="CHEBI:15377"/>
        <dbReference type="ChEBI" id="CHEBI:15378"/>
        <dbReference type="ChEBI" id="CHEBI:15379"/>
        <dbReference type="ChEBI" id="CHEBI:16240"/>
    </reaction>
</comment>
<comment type="cofactor">
    <cofactor evidence="1">
        <name>[2Fe-2S] cluster</name>
        <dbReference type="ChEBI" id="CHEBI:190135"/>
    </cofactor>
    <text evidence="1">Binds 2 [2Fe-2S] clusters per subunit.</text>
</comment>
<comment type="cofactor">
    <cofactor evidence="1">
        <name>FAD</name>
        <dbReference type="ChEBI" id="CHEBI:57692"/>
    </cofactor>
    <text evidence="1">Binds 1 FAD per subunit.</text>
</comment>
<comment type="cofactor">
    <cofactor evidence="1">
        <name>Mo-molybdopterin</name>
        <dbReference type="ChEBI" id="CHEBI:71302"/>
    </cofactor>
    <text evidence="1">Binds 1 Mo-molybdopterin (Mo-MPT) cofactor per subunit.</text>
</comment>
<comment type="subunit">
    <text evidence="1">Homodimer.</text>
</comment>
<comment type="subcellular location">
    <subcellularLocation>
        <location evidence="4">Cytoplasm</location>
    </subcellularLocation>
</comment>
<comment type="miscellaneous">
    <text evidence="8">AOX genes evolved from a xanthine oxidoreductase ancestral precursor via a series of gene duplication and suppression/deletion events. Different animal species contain a different complement of AOX genes encoding an equivalent number of AOX isoenzymes. In mammals, the two extremes are represented by certain rodents such as mice and rats, which are endowed with 4 AOX genes, and by humans, whose genome is characterized by a single active gene (PubMed:23263164).</text>
</comment>
<comment type="similarity">
    <text evidence="7">Belongs to the xanthine dehydrogenase family.</text>
</comment>